<reference key="1">
    <citation type="journal article" date="2006" name="PLoS Genet.">
        <title>Comparative genomics of emerging human ehrlichiosis agents.</title>
        <authorList>
            <person name="Dunning Hotopp J.C."/>
            <person name="Lin M."/>
            <person name="Madupu R."/>
            <person name="Crabtree J."/>
            <person name="Angiuoli S.V."/>
            <person name="Eisen J.A."/>
            <person name="Seshadri R."/>
            <person name="Ren Q."/>
            <person name="Wu M."/>
            <person name="Utterback T.R."/>
            <person name="Smith S."/>
            <person name="Lewis M."/>
            <person name="Khouri H."/>
            <person name="Zhang C."/>
            <person name="Niu H."/>
            <person name="Lin Q."/>
            <person name="Ohashi N."/>
            <person name="Zhi N."/>
            <person name="Nelson W.C."/>
            <person name="Brinkac L.M."/>
            <person name="Dodson R.J."/>
            <person name="Rosovitz M.J."/>
            <person name="Sundaram J.P."/>
            <person name="Daugherty S.C."/>
            <person name="Davidsen T."/>
            <person name="Durkin A.S."/>
            <person name="Gwinn M.L."/>
            <person name="Haft D.H."/>
            <person name="Selengut J.D."/>
            <person name="Sullivan S.A."/>
            <person name="Zafar N."/>
            <person name="Zhou L."/>
            <person name="Benahmed F."/>
            <person name="Forberger H."/>
            <person name="Halpin R."/>
            <person name="Mulligan S."/>
            <person name="Robinson J."/>
            <person name="White O."/>
            <person name="Rikihisa Y."/>
            <person name="Tettelin H."/>
        </authorList>
    </citation>
    <scope>NUCLEOTIDE SEQUENCE [LARGE SCALE GENOMIC DNA]</scope>
    <source>
        <strain>ATCC VR-367 / Miyayama</strain>
    </source>
</reference>
<evidence type="ECO:0000255" key="1">
    <source>
        <dbReference type="HAMAP-Rule" id="MF_00394"/>
    </source>
</evidence>
<feature type="chain" id="PRO_0000255335" description="Glycerol-3-phosphate dehydrogenase [NAD(P)+]">
    <location>
        <begin position="1"/>
        <end position="334"/>
    </location>
</feature>
<feature type="active site" description="Proton acceptor" evidence="1">
    <location>
        <position position="190"/>
    </location>
</feature>
<feature type="binding site" evidence="1">
    <location>
        <position position="14"/>
    </location>
    <ligand>
        <name>NADPH</name>
        <dbReference type="ChEBI" id="CHEBI:57783"/>
    </ligand>
</feature>
<feature type="binding site" evidence="1">
    <location>
        <position position="34"/>
    </location>
    <ligand>
        <name>NADPH</name>
        <dbReference type="ChEBI" id="CHEBI:57783"/>
    </ligand>
</feature>
<feature type="binding site" evidence="1">
    <location>
        <position position="107"/>
    </location>
    <ligand>
        <name>NADPH</name>
        <dbReference type="ChEBI" id="CHEBI:57783"/>
    </ligand>
</feature>
<feature type="binding site" evidence="1">
    <location>
        <position position="107"/>
    </location>
    <ligand>
        <name>sn-glycerol 3-phosphate</name>
        <dbReference type="ChEBI" id="CHEBI:57597"/>
    </ligand>
</feature>
<feature type="binding site" evidence="1">
    <location>
        <position position="135"/>
    </location>
    <ligand>
        <name>sn-glycerol 3-phosphate</name>
        <dbReference type="ChEBI" id="CHEBI:57597"/>
    </ligand>
</feature>
<feature type="binding site" evidence="1">
    <location>
        <position position="139"/>
    </location>
    <ligand>
        <name>NADPH</name>
        <dbReference type="ChEBI" id="CHEBI:57783"/>
    </ligand>
</feature>
<feature type="binding site" evidence="1">
    <location>
        <position position="190"/>
    </location>
    <ligand>
        <name>sn-glycerol 3-phosphate</name>
        <dbReference type="ChEBI" id="CHEBI:57597"/>
    </ligand>
</feature>
<feature type="binding site" evidence="1">
    <location>
        <position position="243"/>
    </location>
    <ligand>
        <name>sn-glycerol 3-phosphate</name>
        <dbReference type="ChEBI" id="CHEBI:57597"/>
    </ligand>
</feature>
<feature type="binding site" evidence="1">
    <location>
        <position position="253"/>
    </location>
    <ligand>
        <name>sn-glycerol 3-phosphate</name>
        <dbReference type="ChEBI" id="CHEBI:57597"/>
    </ligand>
</feature>
<feature type="binding site" evidence="1">
    <location>
        <position position="254"/>
    </location>
    <ligand>
        <name>NADPH</name>
        <dbReference type="ChEBI" id="CHEBI:57783"/>
    </ligand>
</feature>
<feature type="binding site" evidence="1">
    <location>
        <position position="254"/>
    </location>
    <ligand>
        <name>sn-glycerol 3-phosphate</name>
        <dbReference type="ChEBI" id="CHEBI:57597"/>
    </ligand>
</feature>
<feature type="binding site" evidence="1">
    <location>
        <position position="255"/>
    </location>
    <ligand>
        <name>sn-glycerol 3-phosphate</name>
        <dbReference type="ChEBI" id="CHEBI:57597"/>
    </ligand>
</feature>
<feature type="binding site" evidence="1">
    <location>
        <position position="272"/>
    </location>
    <ligand>
        <name>NADPH</name>
        <dbReference type="ChEBI" id="CHEBI:57783"/>
    </ligand>
</feature>
<feature type="binding site" evidence="1">
    <location>
        <position position="273"/>
    </location>
    <ligand>
        <name>NADPH</name>
        <dbReference type="ChEBI" id="CHEBI:57783"/>
    </ligand>
</feature>
<gene>
    <name evidence="1" type="primary">gpsA</name>
    <name type="ordered locus">NSE_0228</name>
</gene>
<name>GPDA_NEOSM</name>
<organism>
    <name type="scientific">Neorickettsia sennetsu (strain ATCC VR-367 / Miyayama)</name>
    <name type="common">Ehrlichia sennetsu</name>
    <dbReference type="NCBI Taxonomy" id="222891"/>
    <lineage>
        <taxon>Bacteria</taxon>
        <taxon>Pseudomonadati</taxon>
        <taxon>Pseudomonadota</taxon>
        <taxon>Alphaproteobacteria</taxon>
        <taxon>Rickettsiales</taxon>
        <taxon>Anaplasmataceae</taxon>
        <taxon>Neorickettsia</taxon>
    </lineage>
</organism>
<sequence>MVLMDSVVIGGGAWGTAIANLLAFNTQRVTIFCRNTTVIDSINKRHINTKYLPTFPLNKNISATSRMDVLKNAELIFVAVPSQSMRELLQKVKENIKESVQIILCNKGIERESLLLMSEVVHEELPKNDIFVLSGPNFAHEVLSKKPSFSNLAGRNKTSYDKIANALSTETFFTKYITDINGTQILGAFKNVIAIICGLLVRMDAGSNTLSALMSLALEEARSFITIKNGNPDTIMEFCGIGDLVLTCFSNKSRNFRYGYRLVDGYSENALVEGKSTLESLHELARIHNINCVLTNTLYTVTQFNSYGTSSFEQDIKRELNSAFMSLLGCAKNP</sequence>
<proteinExistence type="inferred from homology"/>
<accession>Q2GEH4</accession>
<keyword id="KW-0963">Cytoplasm</keyword>
<keyword id="KW-0444">Lipid biosynthesis</keyword>
<keyword id="KW-0443">Lipid metabolism</keyword>
<keyword id="KW-0520">NAD</keyword>
<keyword id="KW-0521">NADP</keyword>
<keyword id="KW-0547">Nucleotide-binding</keyword>
<keyword id="KW-0560">Oxidoreductase</keyword>
<keyword id="KW-0594">Phospholipid biosynthesis</keyword>
<keyword id="KW-1208">Phospholipid metabolism</keyword>
<comment type="function">
    <text evidence="1">Catalyzes the reduction of the glycolytic intermediate dihydroxyacetone phosphate (DHAP) to sn-glycerol 3-phosphate (G3P), the key precursor for phospholipid synthesis.</text>
</comment>
<comment type="catalytic activity">
    <reaction evidence="1">
        <text>sn-glycerol 3-phosphate + NAD(+) = dihydroxyacetone phosphate + NADH + H(+)</text>
        <dbReference type="Rhea" id="RHEA:11092"/>
        <dbReference type="ChEBI" id="CHEBI:15378"/>
        <dbReference type="ChEBI" id="CHEBI:57540"/>
        <dbReference type="ChEBI" id="CHEBI:57597"/>
        <dbReference type="ChEBI" id="CHEBI:57642"/>
        <dbReference type="ChEBI" id="CHEBI:57945"/>
        <dbReference type="EC" id="1.1.1.94"/>
    </reaction>
    <physiologicalReaction direction="right-to-left" evidence="1">
        <dbReference type="Rhea" id="RHEA:11094"/>
    </physiologicalReaction>
</comment>
<comment type="catalytic activity">
    <reaction evidence="1">
        <text>sn-glycerol 3-phosphate + NADP(+) = dihydroxyacetone phosphate + NADPH + H(+)</text>
        <dbReference type="Rhea" id="RHEA:11096"/>
        <dbReference type="ChEBI" id="CHEBI:15378"/>
        <dbReference type="ChEBI" id="CHEBI:57597"/>
        <dbReference type="ChEBI" id="CHEBI:57642"/>
        <dbReference type="ChEBI" id="CHEBI:57783"/>
        <dbReference type="ChEBI" id="CHEBI:58349"/>
        <dbReference type="EC" id="1.1.1.94"/>
    </reaction>
    <physiologicalReaction direction="right-to-left" evidence="1">
        <dbReference type="Rhea" id="RHEA:11098"/>
    </physiologicalReaction>
</comment>
<comment type="pathway">
    <text evidence="1">Membrane lipid metabolism; glycerophospholipid metabolism.</text>
</comment>
<comment type="subcellular location">
    <subcellularLocation>
        <location evidence="1">Cytoplasm</location>
    </subcellularLocation>
</comment>
<comment type="similarity">
    <text evidence="1">Belongs to the NAD-dependent glycerol-3-phosphate dehydrogenase family.</text>
</comment>
<protein>
    <recommendedName>
        <fullName evidence="1">Glycerol-3-phosphate dehydrogenase [NAD(P)+]</fullName>
        <ecNumber evidence="1">1.1.1.94</ecNumber>
    </recommendedName>
    <alternativeName>
        <fullName evidence="1">NAD(P)(+)-dependent glycerol-3-phosphate dehydrogenase</fullName>
    </alternativeName>
    <alternativeName>
        <fullName evidence="1">NAD(P)H-dependent dihydroxyacetone-phosphate reductase</fullName>
    </alternativeName>
</protein>
<dbReference type="EC" id="1.1.1.94" evidence="1"/>
<dbReference type="EMBL" id="CP000237">
    <property type="protein sequence ID" value="ABD46201.1"/>
    <property type="molecule type" value="Genomic_DNA"/>
</dbReference>
<dbReference type="RefSeq" id="WP_011451628.1">
    <property type="nucleotide sequence ID" value="NC_007798.1"/>
</dbReference>
<dbReference type="SMR" id="Q2GEH4"/>
<dbReference type="STRING" id="222891.NSE_0228"/>
<dbReference type="KEGG" id="nse:NSE_0228"/>
<dbReference type="eggNOG" id="COG0240">
    <property type="taxonomic scope" value="Bacteria"/>
</dbReference>
<dbReference type="HOGENOM" id="CLU_033449_0_0_5"/>
<dbReference type="OrthoDB" id="9812273at2"/>
<dbReference type="UniPathway" id="UPA00940"/>
<dbReference type="Proteomes" id="UP000001942">
    <property type="component" value="Chromosome"/>
</dbReference>
<dbReference type="GO" id="GO:0005829">
    <property type="term" value="C:cytosol"/>
    <property type="evidence" value="ECO:0007669"/>
    <property type="project" value="TreeGrafter"/>
</dbReference>
<dbReference type="GO" id="GO:0047952">
    <property type="term" value="F:glycerol-3-phosphate dehydrogenase [NAD(P)+] activity"/>
    <property type="evidence" value="ECO:0007669"/>
    <property type="project" value="UniProtKB-UniRule"/>
</dbReference>
<dbReference type="GO" id="GO:0051287">
    <property type="term" value="F:NAD binding"/>
    <property type="evidence" value="ECO:0007669"/>
    <property type="project" value="InterPro"/>
</dbReference>
<dbReference type="GO" id="GO:0005975">
    <property type="term" value="P:carbohydrate metabolic process"/>
    <property type="evidence" value="ECO:0007669"/>
    <property type="project" value="InterPro"/>
</dbReference>
<dbReference type="GO" id="GO:0046167">
    <property type="term" value="P:glycerol-3-phosphate biosynthetic process"/>
    <property type="evidence" value="ECO:0007669"/>
    <property type="project" value="UniProtKB-UniRule"/>
</dbReference>
<dbReference type="GO" id="GO:0046168">
    <property type="term" value="P:glycerol-3-phosphate catabolic process"/>
    <property type="evidence" value="ECO:0007669"/>
    <property type="project" value="InterPro"/>
</dbReference>
<dbReference type="GO" id="GO:0006650">
    <property type="term" value="P:glycerophospholipid metabolic process"/>
    <property type="evidence" value="ECO:0007669"/>
    <property type="project" value="UniProtKB-UniRule"/>
</dbReference>
<dbReference type="GO" id="GO:0008654">
    <property type="term" value="P:phospholipid biosynthetic process"/>
    <property type="evidence" value="ECO:0007669"/>
    <property type="project" value="UniProtKB-KW"/>
</dbReference>
<dbReference type="FunFam" id="3.40.50.720:FF:000019">
    <property type="entry name" value="Glycerol-3-phosphate dehydrogenase [NAD(P)+]"/>
    <property type="match status" value="1"/>
</dbReference>
<dbReference type="Gene3D" id="1.10.1040.10">
    <property type="entry name" value="N-(1-d-carboxylethyl)-l-norvaline Dehydrogenase, domain 2"/>
    <property type="match status" value="1"/>
</dbReference>
<dbReference type="Gene3D" id="3.40.50.720">
    <property type="entry name" value="NAD(P)-binding Rossmann-like Domain"/>
    <property type="match status" value="1"/>
</dbReference>
<dbReference type="HAMAP" id="MF_00394">
    <property type="entry name" value="NAD_Glyc3P_dehydrog"/>
    <property type="match status" value="1"/>
</dbReference>
<dbReference type="InterPro" id="IPR008927">
    <property type="entry name" value="6-PGluconate_DH-like_C_sf"/>
</dbReference>
<dbReference type="InterPro" id="IPR013328">
    <property type="entry name" value="6PGD_dom2"/>
</dbReference>
<dbReference type="InterPro" id="IPR006168">
    <property type="entry name" value="G3P_DH_NAD-dep"/>
</dbReference>
<dbReference type="InterPro" id="IPR006109">
    <property type="entry name" value="G3P_DH_NAD-dep_C"/>
</dbReference>
<dbReference type="InterPro" id="IPR011128">
    <property type="entry name" value="G3P_DH_NAD-dep_N"/>
</dbReference>
<dbReference type="InterPro" id="IPR036291">
    <property type="entry name" value="NAD(P)-bd_dom_sf"/>
</dbReference>
<dbReference type="NCBIfam" id="NF000940">
    <property type="entry name" value="PRK00094.1-2"/>
    <property type="match status" value="1"/>
</dbReference>
<dbReference type="NCBIfam" id="NF000942">
    <property type="entry name" value="PRK00094.1-4"/>
    <property type="match status" value="1"/>
</dbReference>
<dbReference type="PANTHER" id="PTHR11728">
    <property type="entry name" value="GLYCEROL-3-PHOSPHATE DEHYDROGENASE"/>
    <property type="match status" value="1"/>
</dbReference>
<dbReference type="PANTHER" id="PTHR11728:SF1">
    <property type="entry name" value="GLYCEROL-3-PHOSPHATE DEHYDROGENASE [NAD(+)] 2, CHLOROPLASTIC"/>
    <property type="match status" value="1"/>
</dbReference>
<dbReference type="Pfam" id="PF07479">
    <property type="entry name" value="NAD_Gly3P_dh_C"/>
    <property type="match status" value="1"/>
</dbReference>
<dbReference type="Pfam" id="PF01210">
    <property type="entry name" value="NAD_Gly3P_dh_N"/>
    <property type="match status" value="1"/>
</dbReference>
<dbReference type="PIRSF" id="PIRSF000114">
    <property type="entry name" value="Glycerol-3-P_dh"/>
    <property type="match status" value="1"/>
</dbReference>
<dbReference type="PRINTS" id="PR00077">
    <property type="entry name" value="GPDHDRGNASE"/>
</dbReference>
<dbReference type="SUPFAM" id="SSF48179">
    <property type="entry name" value="6-phosphogluconate dehydrogenase C-terminal domain-like"/>
    <property type="match status" value="1"/>
</dbReference>
<dbReference type="SUPFAM" id="SSF51735">
    <property type="entry name" value="NAD(P)-binding Rossmann-fold domains"/>
    <property type="match status" value="1"/>
</dbReference>